<organism>
    <name type="scientific">Schizosaccharomyces pombe (strain 972 / ATCC 24843)</name>
    <name type="common">Fission yeast</name>
    <dbReference type="NCBI Taxonomy" id="284812"/>
    <lineage>
        <taxon>Eukaryota</taxon>
        <taxon>Fungi</taxon>
        <taxon>Dikarya</taxon>
        <taxon>Ascomycota</taxon>
        <taxon>Taphrinomycotina</taxon>
        <taxon>Schizosaccharomycetes</taxon>
        <taxon>Schizosaccharomycetales</taxon>
        <taxon>Schizosaccharomycetaceae</taxon>
        <taxon>Schizosaccharomyces</taxon>
    </lineage>
</organism>
<protein>
    <recommendedName>
        <fullName>Cell division control protein 18</fullName>
    </recommendedName>
</protein>
<comment type="function">
    <text evidence="4 5 7 8 9 10">Part of the checkpoint control that prevents mitosis from occurring until S phase is completed. Plays a key role in coupling S phase to start and mitosis. Acts at the initiation of DNA replication and plays a major role in controlling the onset of S-phase. Together with orc1, involved in the maintenance of replication forks and activation of cds1-dependent S-phase checkpoint. Together with orc2, plays a role in preventing DNA rereplication and resulting genetic instability (PubMed:11486016).</text>
</comment>
<comment type="subunit">
    <text evidence="3 4 6 10 11">Interacts with the origin recognition complex (ORC) and is recruited to the ars1 origin of replication. Interacts with cdt1, pop1 and pop2.</text>
</comment>
<comment type="interaction">
    <interactant intactId="EBI-1207853">
        <id>P41411</id>
    </interactant>
    <interactant intactId="EBI-1185389">
        <id>P87060</id>
        <label>pop1</label>
    </interactant>
    <organismsDiffer>false</organismsDiffer>
    <experiments>3</experiments>
</comment>
<comment type="interaction">
    <interactant intactId="EBI-1207853">
        <id>P41411</id>
    </interactant>
    <interactant intactId="EBI-1185414">
        <id>O14170</id>
        <label>pop2</label>
    </interactant>
    <organismsDiffer>false</organismsDiffer>
    <experiments>3</experiments>
</comment>
<comment type="PTM">
    <text>Ubiquitinated by pop1 and pop2 and targeted to the 26S proteasome for degradation.</text>
</comment>
<comment type="similarity">
    <text evidence="12">Belongs to the CDC6/cdc18 family.</text>
</comment>
<name>CDC18_SCHPO</name>
<proteinExistence type="evidence at protein level"/>
<feature type="chain" id="PRO_0000150978" description="Cell division control protein 18">
    <location>
        <begin position="1"/>
        <end position="577"/>
    </location>
</feature>
<feature type="region of interest" description="Disordered" evidence="2">
    <location>
        <begin position="30"/>
        <end position="57"/>
    </location>
</feature>
<feature type="region of interest" description="Disordered" evidence="2">
    <location>
        <begin position="84"/>
        <end position="107"/>
    </location>
</feature>
<feature type="region of interest" description="Disordered" evidence="2">
    <location>
        <begin position="136"/>
        <end position="155"/>
    </location>
</feature>
<feature type="compositionally biased region" description="Polar residues" evidence="2">
    <location>
        <begin position="37"/>
        <end position="57"/>
    </location>
</feature>
<feature type="binding site" evidence="1">
    <location>
        <begin position="199"/>
        <end position="206"/>
    </location>
    <ligand>
        <name>ATP</name>
        <dbReference type="ChEBI" id="CHEBI:30616"/>
    </ligand>
</feature>
<feature type="mutagenesis site" description="Enhanced rereplication in orc2 mutant lacking four cdc2 phosphorylation sites; when associated with A-98; A-104 and A-134." evidence="5">
    <original>T</original>
    <variation>A</variation>
    <location>
        <position position="27"/>
    </location>
</feature>
<feature type="mutagenesis site" description="Enhanced rereplication in orc2 mutant lacking four cdc2 phosphorylation sites; when associated with A-27; A-104 and A-134." evidence="5">
    <original>T</original>
    <variation>A</variation>
    <location>
        <position position="98"/>
    </location>
</feature>
<feature type="mutagenesis site" description="Enhanced rereplication in orc2 mutant lacking four cdc2 phosphorylation sites; when associated with A-27; A-98 and A-134." evidence="5">
    <original>T</original>
    <variation>A</variation>
    <location>
        <position position="104"/>
    </location>
</feature>
<feature type="mutagenesis site" description="Enhanced rereplication in orc2 mutant lacking four cdc2 phosphorylation sites; when associated with A-27; A-98 and A-104." evidence="5">
    <original>T</original>
    <variation>A</variation>
    <location>
        <position position="134"/>
    </location>
</feature>
<evidence type="ECO:0000255" key="1"/>
<evidence type="ECO:0000256" key="2">
    <source>
        <dbReference type="SAM" id="MobiDB-lite"/>
    </source>
</evidence>
<evidence type="ECO:0000269" key="3">
    <source>
    </source>
</evidence>
<evidence type="ECO:0000269" key="4">
    <source>
    </source>
</evidence>
<evidence type="ECO:0000269" key="5">
    <source>
    </source>
</evidence>
<evidence type="ECO:0000269" key="6">
    <source>
    </source>
</evidence>
<evidence type="ECO:0000269" key="7">
    <source>
    </source>
</evidence>
<evidence type="ECO:0000269" key="8">
    <source>
    </source>
</evidence>
<evidence type="ECO:0000269" key="9">
    <source>
    </source>
</evidence>
<evidence type="ECO:0000269" key="10">
    <source>
    </source>
</evidence>
<evidence type="ECO:0000269" key="11">
    <source>
    </source>
</evidence>
<evidence type="ECO:0000305" key="12"/>
<accession>P41411</accession>
<sequence length="577" mass="64753">MCETPIGCHTPRRCNRFIDSAALIDCTNKTNQREHSPSFSIEIPTTPSRKRTLASSHFQTPTKRIKYELGELQEEKTDLYPNFPAQLKENKKPKLPTTPQTPKTPKRTIQIVTPKSLNRTCNPVPFATRLLQSTPHRQLFPPTPSTPSTPSYNSTAKLSLRKSYRSAGVVGRENEKSIVESFFRQHLDANAGGALYVSGAPGTGKTVLLHNVLDHVVSDYPKVNVCYINCMTINEPKAIFEKIHSKIVKEEILENEDHHINFQCELESHFTQSANELYNPVIIVLDEMDHLIAREQQVLYTLFEWPSRPTSRLILVGIANALDMTDRFLPRLRTKHITPKLLSFTPYTAQEISTIIKARLKTAATTSEKNNPFTPIKSISEVSDDSINVVSQHADETPFIHPAAIELCARKVAASSGDLRKALDICRHAIELAEREWKAQHDNTLSSVDIPRASIAHVVRATSAMSQSASARLKNLGLQQKAILCTLVVCEKTSLSVADVFEKYSSLCLRDRLIYPLTSSEFCDVANSLETLAIIRLRTKQRNGKPQDRIISLLVPEMDVITAVGDIGTLKRFFDRR</sequence>
<gene>
    <name type="primary">cdc18</name>
    <name type="ORF">SPBC14C8.07c</name>
</gene>
<keyword id="KW-0067">ATP-binding</keyword>
<keyword id="KW-0131">Cell cycle</keyword>
<keyword id="KW-0132">Cell division</keyword>
<keyword id="KW-0235">DNA replication</keyword>
<keyword id="KW-0498">Mitosis</keyword>
<keyword id="KW-0547">Nucleotide-binding</keyword>
<keyword id="KW-1185">Reference proteome</keyword>
<keyword id="KW-0832">Ubl conjugation</keyword>
<reference key="1">
    <citation type="journal article" date="1993" name="Cell">
        <title>The fission yeast cdc18+ gene product couples S phase to START and mitosis.</title>
        <authorList>
            <person name="Kelly T.J."/>
            <person name="Martin G.S."/>
            <person name="Forsburg S.L."/>
            <person name="Stephen R.J."/>
            <person name="Russo A."/>
            <person name="Nurse P."/>
        </authorList>
    </citation>
    <scope>NUCLEOTIDE SEQUENCE [GENOMIC DNA]</scope>
    <scope>FUNCTION</scope>
    <source>
        <strain>972 / ATCC 24843</strain>
    </source>
</reference>
<reference key="2">
    <citation type="journal article" date="2002" name="Nature">
        <title>The genome sequence of Schizosaccharomyces pombe.</title>
        <authorList>
            <person name="Wood V."/>
            <person name="Gwilliam R."/>
            <person name="Rajandream M.A."/>
            <person name="Lyne M.H."/>
            <person name="Lyne R."/>
            <person name="Stewart A."/>
            <person name="Sgouros J.G."/>
            <person name="Peat N."/>
            <person name="Hayles J."/>
            <person name="Baker S.G."/>
            <person name="Basham D."/>
            <person name="Bowman S."/>
            <person name="Brooks K."/>
            <person name="Brown D."/>
            <person name="Brown S."/>
            <person name="Chillingworth T."/>
            <person name="Churcher C.M."/>
            <person name="Collins M."/>
            <person name="Connor R."/>
            <person name="Cronin A."/>
            <person name="Davis P."/>
            <person name="Feltwell T."/>
            <person name="Fraser A."/>
            <person name="Gentles S."/>
            <person name="Goble A."/>
            <person name="Hamlin N."/>
            <person name="Harris D.E."/>
            <person name="Hidalgo J."/>
            <person name="Hodgson G."/>
            <person name="Holroyd S."/>
            <person name="Hornsby T."/>
            <person name="Howarth S."/>
            <person name="Huckle E.J."/>
            <person name="Hunt S."/>
            <person name="Jagels K."/>
            <person name="James K.D."/>
            <person name="Jones L."/>
            <person name="Jones M."/>
            <person name="Leather S."/>
            <person name="McDonald S."/>
            <person name="McLean J."/>
            <person name="Mooney P."/>
            <person name="Moule S."/>
            <person name="Mungall K.L."/>
            <person name="Murphy L.D."/>
            <person name="Niblett D."/>
            <person name="Odell C."/>
            <person name="Oliver K."/>
            <person name="O'Neil S."/>
            <person name="Pearson D."/>
            <person name="Quail M.A."/>
            <person name="Rabbinowitsch E."/>
            <person name="Rutherford K.M."/>
            <person name="Rutter S."/>
            <person name="Saunders D."/>
            <person name="Seeger K."/>
            <person name="Sharp S."/>
            <person name="Skelton J."/>
            <person name="Simmonds M.N."/>
            <person name="Squares R."/>
            <person name="Squares S."/>
            <person name="Stevens K."/>
            <person name="Taylor K."/>
            <person name="Taylor R.G."/>
            <person name="Tivey A."/>
            <person name="Walsh S.V."/>
            <person name="Warren T."/>
            <person name="Whitehead S."/>
            <person name="Woodward J.R."/>
            <person name="Volckaert G."/>
            <person name="Aert R."/>
            <person name="Robben J."/>
            <person name="Grymonprez B."/>
            <person name="Weltjens I."/>
            <person name="Vanstreels E."/>
            <person name="Rieger M."/>
            <person name="Schaefer M."/>
            <person name="Mueller-Auer S."/>
            <person name="Gabel C."/>
            <person name="Fuchs M."/>
            <person name="Duesterhoeft A."/>
            <person name="Fritzc C."/>
            <person name="Holzer E."/>
            <person name="Moestl D."/>
            <person name="Hilbert H."/>
            <person name="Borzym K."/>
            <person name="Langer I."/>
            <person name="Beck A."/>
            <person name="Lehrach H."/>
            <person name="Reinhardt R."/>
            <person name="Pohl T.M."/>
            <person name="Eger P."/>
            <person name="Zimmermann W."/>
            <person name="Wedler H."/>
            <person name="Wambutt R."/>
            <person name="Purnelle B."/>
            <person name="Goffeau A."/>
            <person name="Cadieu E."/>
            <person name="Dreano S."/>
            <person name="Gloux S."/>
            <person name="Lelaure V."/>
            <person name="Mottier S."/>
            <person name="Galibert F."/>
            <person name="Aves S.J."/>
            <person name="Xiang Z."/>
            <person name="Hunt C."/>
            <person name="Moore K."/>
            <person name="Hurst S.M."/>
            <person name="Lucas M."/>
            <person name="Rochet M."/>
            <person name="Gaillardin C."/>
            <person name="Tallada V.A."/>
            <person name="Garzon A."/>
            <person name="Thode G."/>
            <person name="Daga R.R."/>
            <person name="Cruzado L."/>
            <person name="Jimenez J."/>
            <person name="Sanchez M."/>
            <person name="del Rey F."/>
            <person name="Benito J."/>
            <person name="Dominguez A."/>
            <person name="Revuelta J.L."/>
            <person name="Moreno S."/>
            <person name="Armstrong J."/>
            <person name="Forsburg S.L."/>
            <person name="Cerutti L."/>
            <person name="Lowe T."/>
            <person name="McCombie W.R."/>
            <person name="Paulsen I."/>
            <person name="Potashkin J."/>
            <person name="Shpakovski G.V."/>
            <person name="Ussery D."/>
            <person name="Barrell B.G."/>
            <person name="Nurse P."/>
        </authorList>
    </citation>
    <scope>NUCLEOTIDE SEQUENCE [LARGE SCALE GENOMIC DNA]</scope>
    <source>
        <strain>972 / ATCC 24843</strain>
    </source>
</reference>
<reference key="3">
    <citation type="journal article" date="1995" name="Cell">
        <title>p65cdc18 plays a major role controlling the initiation of DNA replication in fission yeast.</title>
        <authorList>
            <person name="Nishitani H."/>
            <person name="Nurse P."/>
        </authorList>
    </citation>
    <scope>FUNCTION</scope>
</reference>
<reference key="4">
    <citation type="journal article" date="1997" name="Genes Dev.">
        <title>Fission yeast WD-repeat protein pop1 regulates genome ploidy through ubiquitin-proteasome-mediated degradation of the CDK inhibitor Rum1 and the S-phase initiator Cdc18.</title>
        <authorList>
            <person name="Kominami K."/>
            <person name="Toda T."/>
        </authorList>
    </citation>
    <scope>FUNCTION</scope>
    <scope>INTERACTION WITH POP1</scope>
</reference>
<reference key="5">
    <citation type="journal article" date="1998" name="Proc. Natl. Acad. Sci. U.S.A.">
        <title>sud1+ targets cyclin-dependent kinase-phosphorylated Cdc18 and Rum1 proteins for degradation and stops unwanted diploidization in fission yeast.</title>
        <authorList>
            <person name="Jallepalli P.V."/>
            <person name="Tien D."/>
            <person name="Kelly T.J."/>
        </authorList>
    </citation>
    <scope>INTERACTION WITH POP2</scope>
</reference>
<reference key="6">
    <citation type="journal article" date="1999" name="Curr. Biol.">
        <title>F-box/WD-repeat proteins pop1p and Sud1p/Pop2p form complexes that bind and direct the proteolysis of cdc18p.</title>
        <authorList>
            <person name="Wolf D.A."/>
            <person name="McKeon F."/>
            <person name="Jackson P.K."/>
        </authorList>
    </citation>
    <scope>INTERACTION WITH POP1 AND POP2</scope>
</reference>
<reference key="7">
    <citation type="journal article" date="2000" name="Nature">
        <title>The Cdt1 protein is required to license DNA for replication in fission yeast.</title>
        <authorList>
            <person name="Nishitani H."/>
            <person name="Lygerou Z."/>
            <person name="Nishimoto T."/>
            <person name="Nurse P."/>
        </authorList>
    </citation>
    <scope>FUNCTION</scope>
    <scope>INTERACTION WITH CDT1</scope>
</reference>
<reference key="8">
    <citation type="journal article" date="2001" name="Mol. Cell. Biol.">
        <title>Control of DNA rereplication via Cdc2 phosphorylation sites in the origin recognition complex.</title>
        <authorList>
            <person name="Vas A."/>
            <person name="Mok W."/>
            <person name="Leatherwood J."/>
        </authorList>
    </citation>
    <scope>FUNCTION</scope>
    <scope>MUTAGENESIS OF THR-27; THR-98; THR-104 AND THR-134</scope>
</reference>
<reference key="9">
    <citation type="journal article" date="2002" name="J. Biol. Chem.">
        <title>Purification and characterization of the Schizosaccharomyces pombe origin recognition complex: interaction with origin DNA and Cdc18 protein.</title>
        <authorList>
            <person name="Chuang R.-Y."/>
            <person name="Chretien L."/>
            <person name="Dai J."/>
            <person name="Kelly T.J."/>
        </authorList>
    </citation>
    <scope>INTERACTION WITH ORC</scope>
</reference>
<reference key="10">
    <citation type="journal article" date="2002" name="Nat. Cell Biol.">
        <title>Maintenance of replication forks and the S-phase checkpoint by Cdc18p and Orp1p.</title>
        <authorList>
            <person name="Murakami H."/>
            <person name="Yanow S.K."/>
            <person name="Griffiths D."/>
            <person name="Nakanishi M."/>
            <person name="Nurse P."/>
        </authorList>
    </citation>
    <scope>FUNCTION</scope>
</reference>
<dbReference type="EMBL" id="L16793">
    <property type="protein sequence ID" value="AAA02871.1"/>
    <property type="molecule type" value="Genomic_DNA"/>
</dbReference>
<dbReference type="EMBL" id="CU329671">
    <property type="protein sequence ID" value="CAA18425.1"/>
    <property type="molecule type" value="Genomic_DNA"/>
</dbReference>
<dbReference type="PIR" id="A40726">
    <property type="entry name" value="A40726"/>
</dbReference>
<dbReference type="RefSeq" id="NP_595910.1">
    <property type="nucleotide sequence ID" value="NM_001021818.2"/>
</dbReference>
<dbReference type="SMR" id="P41411"/>
<dbReference type="BioGRID" id="276557">
    <property type="interactions" value="56"/>
</dbReference>
<dbReference type="FunCoup" id="P41411">
    <property type="interactions" value="572"/>
</dbReference>
<dbReference type="IntAct" id="P41411">
    <property type="interactions" value="3"/>
</dbReference>
<dbReference type="STRING" id="284812.P41411"/>
<dbReference type="iPTMnet" id="P41411"/>
<dbReference type="PaxDb" id="4896-SPBC14C8.07c.1"/>
<dbReference type="EnsemblFungi" id="SPBC14C8.07c.1">
    <property type="protein sequence ID" value="SPBC14C8.07c.1:pep"/>
    <property type="gene ID" value="SPBC14C8.07c"/>
</dbReference>
<dbReference type="GeneID" id="2540013"/>
<dbReference type="KEGG" id="spo:2540013"/>
<dbReference type="PomBase" id="SPBC14C8.07c">
    <property type="gene designation" value="cdc18"/>
</dbReference>
<dbReference type="VEuPathDB" id="FungiDB:SPBC14C8.07c"/>
<dbReference type="eggNOG" id="KOG2227">
    <property type="taxonomic scope" value="Eukaryota"/>
</dbReference>
<dbReference type="HOGENOM" id="CLU_012774_2_0_1"/>
<dbReference type="InParanoid" id="P41411"/>
<dbReference type="OMA" id="LFEWSLH"/>
<dbReference type="PhylomeDB" id="P41411"/>
<dbReference type="Reactome" id="R-SPO-176187">
    <property type="pathway name" value="Activation of ATR in response to replication stress"/>
</dbReference>
<dbReference type="Reactome" id="R-SPO-68689">
    <property type="pathway name" value="CDC6 association with the ORC:origin complex"/>
</dbReference>
<dbReference type="Reactome" id="R-SPO-68949">
    <property type="pathway name" value="Orc1 removal from chromatin"/>
</dbReference>
<dbReference type="Reactome" id="R-SPO-68962">
    <property type="pathway name" value="Activation of the pre-replicative complex"/>
</dbReference>
<dbReference type="Reactome" id="R-SPO-69017">
    <property type="pathway name" value="CDK-mediated phosphorylation and removal of Cdc6"/>
</dbReference>
<dbReference type="PRO" id="PR:P41411"/>
<dbReference type="Proteomes" id="UP000002485">
    <property type="component" value="Chromosome II"/>
</dbReference>
<dbReference type="GO" id="GO:0000785">
    <property type="term" value="C:chromatin"/>
    <property type="evidence" value="ECO:0000314"/>
    <property type="project" value="PomBase"/>
</dbReference>
<dbReference type="GO" id="GO:0005656">
    <property type="term" value="C:nuclear pre-replicative complex"/>
    <property type="evidence" value="ECO:0000266"/>
    <property type="project" value="PomBase"/>
</dbReference>
<dbReference type="GO" id="GO:0043596">
    <property type="term" value="C:nuclear replication fork"/>
    <property type="evidence" value="ECO:0000305"/>
    <property type="project" value="PomBase"/>
</dbReference>
<dbReference type="GO" id="GO:0005634">
    <property type="term" value="C:nucleus"/>
    <property type="evidence" value="ECO:0000314"/>
    <property type="project" value="PomBase"/>
</dbReference>
<dbReference type="GO" id="GO:0005524">
    <property type="term" value="F:ATP binding"/>
    <property type="evidence" value="ECO:0000255"/>
    <property type="project" value="PomBase"/>
</dbReference>
<dbReference type="GO" id="GO:0016887">
    <property type="term" value="F:ATP hydrolysis activity"/>
    <property type="evidence" value="ECO:0007669"/>
    <property type="project" value="InterPro"/>
</dbReference>
<dbReference type="GO" id="GO:0003688">
    <property type="term" value="F:DNA replication origin binding"/>
    <property type="evidence" value="ECO:0000318"/>
    <property type="project" value="GO_Central"/>
</dbReference>
<dbReference type="GO" id="GO:0051301">
    <property type="term" value="P:cell division"/>
    <property type="evidence" value="ECO:0007669"/>
    <property type="project" value="UniProtKB-KW"/>
</dbReference>
<dbReference type="GO" id="GO:0006270">
    <property type="term" value="P:DNA replication initiation"/>
    <property type="evidence" value="ECO:0000318"/>
    <property type="project" value="GO_Central"/>
</dbReference>
<dbReference type="GO" id="GO:0140530">
    <property type="term" value="P:MCM complex loading"/>
    <property type="evidence" value="ECO:0000315"/>
    <property type="project" value="PomBase"/>
</dbReference>
<dbReference type="GO" id="GO:0033314">
    <property type="term" value="P:mitotic DNA replication checkpoint signaling"/>
    <property type="evidence" value="ECO:0000316"/>
    <property type="project" value="PomBase"/>
</dbReference>
<dbReference type="GO" id="GO:1902985">
    <property type="term" value="P:mitotic pre-replicative complex assembly"/>
    <property type="evidence" value="ECO:0000266"/>
    <property type="project" value="PomBase"/>
</dbReference>
<dbReference type="GO" id="GO:1903468">
    <property type="term" value="P:positive regulation of DNA replication initiation"/>
    <property type="evidence" value="ECO:0000315"/>
    <property type="project" value="PomBase"/>
</dbReference>
<dbReference type="GO" id="GO:1905634">
    <property type="term" value="P:regulation of protein localization to chromatin"/>
    <property type="evidence" value="ECO:0000315"/>
    <property type="project" value="PomBase"/>
</dbReference>
<dbReference type="CDD" id="cd00009">
    <property type="entry name" value="AAA"/>
    <property type="match status" value="1"/>
</dbReference>
<dbReference type="CDD" id="cd08768">
    <property type="entry name" value="Cdc6_C"/>
    <property type="match status" value="1"/>
</dbReference>
<dbReference type="FunFam" id="3.40.50.300:FF:000547">
    <property type="entry name" value="Cell division control protein"/>
    <property type="match status" value="1"/>
</dbReference>
<dbReference type="Gene3D" id="1.10.8.60">
    <property type="match status" value="1"/>
</dbReference>
<dbReference type="Gene3D" id="3.40.50.300">
    <property type="entry name" value="P-loop containing nucleotide triphosphate hydrolases"/>
    <property type="match status" value="1"/>
</dbReference>
<dbReference type="Gene3D" id="1.10.10.10">
    <property type="entry name" value="Winged helix-like DNA-binding domain superfamily/Winged helix DNA-binding domain"/>
    <property type="match status" value="1"/>
</dbReference>
<dbReference type="InterPro" id="IPR003593">
    <property type="entry name" value="AAA+_ATPase"/>
</dbReference>
<dbReference type="InterPro" id="IPR041664">
    <property type="entry name" value="AAA_16"/>
</dbReference>
<dbReference type="InterPro" id="IPR041083">
    <property type="entry name" value="AAA_lid_10"/>
</dbReference>
<dbReference type="InterPro" id="IPR016314">
    <property type="entry name" value="Cdc6/18"/>
</dbReference>
<dbReference type="InterPro" id="IPR015163">
    <property type="entry name" value="Cdc6_C"/>
</dbReference>
<dbReference type="InterPro" id="IPR050311">
    <property type="entry name" value="ORC1/CDC6"/>
</dbReference>
<dbReference type="InterPro" id="IPR027417">
    <property type="entry name" value="P-loop_NTPase"/>
</dbReference>
<dbReference type="InterPro" id="IPR036388">
    <property type="entry name" value="WH-like_DNA-bd_sf"/>
</dbReference>
<dbReference type="InterPro" id="IPR036390">
    <property type="entry name" value="WH_DNA-bd_sf"/>
</dbReference>
<dbReference type="PANTHER" id="PTHR10763:SF26">
    <property type="entry name" value="CELL DIVISION CONTROL PROTEIN 6 HOMOLOG"/>
    <property type="match status" value="1"/>
</dbReference>
<dbReference type="PANTHER" id="PTHR10763">
    <property type="entry name" value="CELL DIVISION CONTROL PROTEIN 6-RELATED"/>
    <property type="match status" value="1"/>
</dbReference>
<dbReference type="Pfam" id="PF13191">
    <property type="entry name" value="AAA_16"/>
    <property type="match status" value="1"/>
</dbReference>
<dbReference type="Pfam" id="PF17872">
    <property type="entry name" value="AAA_lid_10"/>
    <property type="match status" value="1"/>
</dbReference>
<dbReference type="Pfam" id="PF09079">
    <property type="entry name" value="Cdc6_C"/>
    <property type="match status" value="1"/>
</dbReference>
<dbReference type="PIRSF" id="PIRSF001767">
    <property type="entry name" value="Cdc6"/>
    <property type="match status" value="1"/>
</dbReference>
<dbReference type="SMART" id="SM00382">
    <property type="entry name" value="AAA"/>
    <property type="match status" value="1"/>
</dbReference>
<dbReference type="SMART" id="SM01074">
    <property type="entry name" value="Cdc6_C"/>
    <property type="match status" value="1"/>
</dbReference>
<dbReference type="SUPFAM" id="SSF52540">
    <property type="entry name" value="P-loop containing nucleoside triphosphate hydrolases"/>
    <property type="match status" value="1"/>
</dbReference>
<dbReference type="SUPFAM" id="SSF46785">
    <property type="entry name" value="Winged helix' DNA-binding domain"/>
    <property type="match status" value="1"/>
</dbReference>